<reference key="1">
    <citation type="journal article" date="2000" name="Nucleic Acids Res.">
        <title>Complete genome sequence of the alkaliphilic bacterium Bacillus halodurans and genomic sequence comparison with Bacillus subtilis.</title>
        <authorList>
            <person name="Takami H."/>
            <person name="Nakasone K."/>
            <person name="Takaki Y."/>
            <person name="Maeno G."/>
            <person name="Sasaki R."/>
            <person name="Masui N."/>
            <person name="Fuji F."/>
            <person name="Hirama C."/>
            <person name="Nakamura Y."/>
            <person name="Ogasawara N."/>
            <person name="Kuhara S."/>
            <person name="Horikoshi K."/>
        </authorList>
    </citation>
    <scope>NUCLEOTIDE SEQUENCE [LARGE SCALE GENOMIC DNA]</scope>
    <source>
        <strain>ATCC BAA-125 / DSM 18197 / FERM 7344 / JCM 9153 / C-125</strain>
    </source>
</reference>
<protein>
    <recommendedName>
        <fullName evidence="1">Glutamyl-tRNA reductase</fullName>
        <shortName evidence="1">GluTR</shortName>
        <ecNumber evidence="1">1.2.1.70</ecNumber>
    </recommendedName>
</protein>
<organism>
    <name type="scientific">Halalkalibacterium halodurans (strain ATCC BAA-125 / DSM 18197 / FERM 7344 / JCM 9153 / C-125)</name>
    <name type="common">Bacillus halodurans</name>
    <dbReference type="NCBI Taxonomy" id="272558"/>
    <lineage>
        <taxon>Bacteria</taxon>
        <taxon>Bacillati</taxon>
        <taxon>Bacillota</taxon>
        <taxon>Bacilli</taxon>
        <taxon>Bacillales</taxon>
        <taxon>Bacillaceae</taxon>
        <taxon>Halalkalibacterium (ex Joshi et al. 2022)</taxon>
    </lineage>
</organism>
<keyword id="KW-0521">NADP</keyword>
<keyword id="KW-0560">Oxidoreductase</keyword>
<keyword id="KW-0627">Porphyrin biosynthesis</keyword>
<keyword id="KW-1185">Reference proteome</keyword>
<dbReference type="EC" id="1.2.1.70" evidence="1"/>
<dbReference type="EMBL" id="BA000004">
    <property type="protein sequence ID" value="BAB06767.1"/>
    <property type="molecule type" value="Genomic_DNA"/>
</dbReference>
<dbReference type="PIR" id="H84030">
    <property type="entry name" value="H84030"/>
</dbReference>
<dbReference type="RefSeq" id="WP_010899192.1">
    <property type="nucleotide sequence ID" value="NC_002570.2"/>
</dbReference>
<dbReference type="SMR" id="Q9K8F8"/>
<dbReference type="STRING" id="272558.gene:10728958"/>
<dbReference type="KEGG" id="bha:BH3048"/>
<dbReference type="eggNOG" id="COG0373">
    <property type="taxonomic scope" value="Bacteria"/>
</dbReference>
<dbReference type="HOGENOM" id="CLU_035113_2_2_9"/>
<dbReference type="OrthoDB" id="110209at2"/>
<dbReference type="UniPathway" id="UPA00251">
    <property type="reaction ID" value="UER00316"/>
</dbReference>
<dbReference type="Proteomes" id="UP000001258">
    <property type="component" value="Chromosome"/>
</dbReference>
<dbReference type="GO" id="GO:0008883">
    <property type="term" value="F:glutamyl-tRNA reductase activity"/>
    <property type="evidence" value="ECO:0007669"/>
    <property type="project" value="UniProtKB-UniRule"/>
</dbReference>
<dbReference type="GO" id="GO:0050661">
    <property type="term" value="F:NADP binding"/>
    <property type="evidence" value="ECO:0007669"/>
    <property type="project" value="InterPro"/>
</dbReference>
<dbReference type="GO" id="GO:0019353">
    <property type="term" value="P:protoporphyrinogen IX biosynthetic process from glutamate"/>
    <property type="evidence" value="ECO:0007669"/>
    <property type="project" value="TreeGrafter"/>
</dbReference>
<dbReference type="CDD" id="cd05213">
    <property type="entry name" value="NAD_bind_Glutamyl_tRNA_reduct"/>
    <property type="match status" value="1"/>
</dbReference>
<dbReference type="FunFam" id="3.30.460.30:FF:000001">
    <property type="entry name" value="Glutamyl-tRNA reductase"/>
    <property type="match status" value="1"/>
</dbReference>
<dbReference type="FunFam" id="3.40.50.720:FF:000031">
    <property type="entry name" value="Glutamyl-tRNA reductase"/>
    <property type="match status" value="1"/>
</dbReference>
<dbReference type="Gene3D" id="3.30.460.30">
    <property type="entry name" value="Glutamyl-tRNA reductase, N-terminal domain"/>
    <property type="match status" value="1"/>
</dbReference>
<dbReference type="Gene3D" id="3.40.50.720">
    <property type="entry name" value="NAD(P)-binding Rossmann-like Domain"/>
    <property type="match status" value="1"/>
</dbReference>
<dbReference type="HAMAP" id="MF_00087">
    <property type="entry name" value="Glu_tRNA_reductase"/>
    <property type="match status" value="1"/>
</dbReference>
<dbReference type="InterPro" id="IPR000343">
    <property type="entry name" value="4pyrrol_synth_GluRdtase"/>
</dbReference>
<dbReference type="InterPro" id="IPR015896">
    <property type="entry name" value="4pyrrol_synth_GluRdtase_dimer"/>
</dbReference>
<dbReference type="InterPro" id="IPR015895">
    <property type="entry name" value="4pyrrol_synth_GluRdtase_N"/>
</dbReference>
<dbReference type="InterPro" id="IPR018214">
    <property type="entry name" value="GluRdtase_CS"/>
</dbReference>
<dbReference type="InterPro" id="IPR036453">
    <property type="entry name" value="GluRdtase_dimer_dom_sf"/>
</dbReference>
<dbReference type="InterPro" id="IPR036343">
    <property type="entry name" value="GluRdtase_N_sf"/>
</dbReference>
<dbReference type="InterPro" id="IPR036291">
    <property type="entry name" value="NAD(P)-bd_dom_sf"/>
</dbReference>
<dbReference type="InterPro" id="IPR006151">
    <property type="entry name" value="Shikm_DH/Glu-tRNA_Rdtase"/>
</dbReference>
<dbReference type="NCBIfam" id="TIGR01035">
    <property type="entry name" value="hemA"/>
    <property type="match status" value="1"/>
</dbReference>
<dbReference type="NCBIfam" id="NF000744">
    <property type="entry name" value="PRK00045.1-3"/>
    <property type="match status" value="1"/>
</dbReference>
<dbReference type="PANTHER" id="PTHR43013">
    <property type="entry name" value="GLUTAMYL-TRNA REDUCTASE"/>
    <property type="match status" value="1"/>
</dbReference>
<dbReference type="PANTHER" id="PTHR43013:SF1">
    <property type="entry name" value="GLUTAMYL-TRNA REDUCTASE"/>
    <property type="match status" value="1"/>
</dbReference>
<dbReference type="Pfam" id="PF00745">
    <property type="entry name" value="GlutR_dimer"/>
    <property type="match status" value="1"/>
</dbReference>
<dbReference type="Pfam" id="PF05201">
    <property type="entry name" value="GlutR_N"/>
    <property type="match status" value="1"/>
</dbReference>
<dbReference type="Pfam" id="PF01488">
    <property type="entry name" value="Shikimate_DH"/>
    <property type="match status" value="1"/>
</dbReference>
<dbReference type="PIRSF" id="PIRSF000445">
    <property type="entry name" value="4pyrrol_synth_GluRdtase"/>
    <property type="match status" value="1"/>
</dbReference>
<dbReference type="SUPFAM" id="SSF69742">
    <property type="entry name" value="Glutamyl tRNA-reductase catalytic, N-terminal domain"/>
    <property type="match status" value="1"/>
</dbReference>
<dbReference type="SUPFAM" id="SSF69075">
    <property type="entry name" value="Glutamyl tRNA-reductase dimerization domain"/>
    <property type="match status" value="1"/>
</dbReference>
<dbReference type="SUPFAM" id="SSF51735">
    <property type="entry name" value="NAD(P)-binding Rossmann-fold domains"/>
    <property type="match status" value="1"/>
</dbReference>
<dbReference type="PROSITE" id="PS00747">
    <property type="entry name" value="GLUTR"/>
    <property type="match status" value="1"/>
</dbReference>
<accession>Q9K8F8</accession>
<name>HEM1_HALH5</name>
<proteinExistence type="inferred from homology"/>
<sequence>MHILMIGLNYKTAPVEIREKFSFQDSELPQALHQLRQMKSILECTIVSTCNRTELYVVADQLHTGRHFTKTFLADWFKLPKDEFTPFLTIRENDHAIEHLFRVVTGLDSMILGETQILGQVRNSFFIAQEEQVTGSIFNHLFKQAITLAKRAHSETDIGQNAVSVSYAAVELGKKIFDDFKGKQVLILGAGKMGELTAKHLHSNGAEQVTVINRTREKAAELAKRFLGVDRPYNELTEAIVEADILISSTGATGYVVTSDMVSHALKKRKGRPLFMVDIAVPRDLDPALASHDDVYLYDIDDLQNIVQTNLEERRTEAEKIELLIEEELVEFKQWLNTLGVVPIITALRTKALTVQGETMESIERKLPNLTEREKKVLRKHTKSIVNQLLRDPITRIKELANAPEREEALDLFTKIFALEEELAEQEKQEKVKQAEQEWLAKKRPITCMEKQSHVMVKS</sequence>
<gene>
    <name evidence="1" type="primary">hemA</name>
    <name type="ordered locus">BH3048</name>
</gene>
<evidence type="ECO:0000255" key="1">
    <source>
        <dbReference type="HAMAP-Rule" id="MF_00087"/>
    </source>
</evidence>
<feature type="chain" id="PRO_0000113992" description="Glutamyl-tRNA reductase">
    <location>
        <begin position="1"/>
        <end position="459"/>
    </location>
</feature>
<feature type="active site" description="Nucleophile" evidence="1">
    <location>
        <position position="50"/>
    </location>
</feature>
<feature type="binding site" evidence="1">
    <location>
        <begin position="49"/>
        <end position="52"/>
    </location>
    <ligand>
        <name>substrate</name>
    </ligand>
</feature>
<feature type="binding site" evidence="1">
    <location>
        <position position="109"/>
    </location>
    <ligand>
        <name>substrate</name>
    </ligand>
</feature>
<feature type="binding site" evidence="1">
    <location>
        <begin position="114"/>
        <end position="116"/>
    </location>
    <ligand>
        <name>substrate</name>
    </ligand>
</feature>
<feature type="binding site" evidence="1">
    <location>
        <position position="120"/>
    </location>
    <ligand>
        <name>substrate</name>
    </ligand>
</feature>
<feature type="binding site" evidence="1">
    <location>
        <begin position="189"/>
        <end position="194"/>
    </location>
    <ligand>
        <name>NADP(+)</name>
        <dbReference type="ChEBI" id="CHEBI:58349"/>
    </ligand>
</feature>
<feature type="site" description="Important for activity" evidence="1">
    <location>
        <position position="99"/>
    </location>
</feature>
<comment type="function">
    <text evidence="1">Catalyzes the NADPH-dependent reduction of glutamyl-tRNA(Glu) to glutamate 1-semialdehyde (GSA).</text>
</comment>
<comment type="catalytic activity">
    <reaction evidence="1">
        <text>(S)-4-amino-5-oxopentanoate + tRNA(Glu) + NADP(+) = L-glutamyl-tRNA(Glu) + NADPH + H(+)</text>
        <dbReference type="Rhea" id="RHEA:12344"/>
        <dbReference type="Rhea" id="RHEA-COMP:9663"/>
        <dbReference type="Rhea" id="RHEA-COMP:9680"/>
        <dbReference type="ChEBI" id="CHEBI:15378"/>
        <dbReference type="ChEBI" id="CHEBI:57501"/>
        <dbReference type="ChEBI" id="CHEBI:57783"/>
        <dbReference type="ChEBI" id="CHEBI:58349"/>
        <dbReference type="ChEBI" id="CHEBI:78442"/>
        <dbReference type="ChEBI" id="CHEBI:78520"/>
        <dbReference type="EC" id="1.2.1.70"/>
    </reaction>
</comment>
<comment type="pathway">
    <text evidence="1">Porphyrin-containing compound metabolism; protoporphyrin-IX biosynthesis; 5-aminolevulinate from L-glutamyl-tRNA(Glu): step 1/2.</text>
</comment>
<comment type="subunit">
    <text evidence="1">Homodimer.</text>
</comment>
<comment type="domain">
    <text evidence="1">Possesses an unusual extended V-shaped dimeric structure with each monomer consisting of three distinct domains arranged along a curved 'spinal' alpha-helix. The N-terminal catalytic domain specifically recognizes the glutamate moiety of the substrate. The second domain is the NADPH-binding domain, and the third C-terminal domain is responsible for dimerization.</text>
</comment>
<comment type="miscellaneous">
    <text evidence="1">During catalysis, the active site Cys acts as a nucleophile attacking the alpha-carbonyl group of tRNA-bound glutamate with the formation of a thioester intermediate between enzyme and glutamate, and the concomitant release of tRNA(Glu). The thioester intermediate is finally reduced by direct hydride transfer from NADPH, to form the product GSA.</text>
</comment>
<comment type="similarity">
    <text evidence="1">Belongs to the glutamyl-tRNA reductase family.</text>
</comment>